<reference key="1">
    <citation type="submission" date="2005-09" db="EMBL/GenBank/DDBJ databases">
        <title>Annotation of the Aspergillus terreus NIH2624 genome.</title>
        <authorList>
            <person name="Birren B.W."/>
            <person name="Lander E.S."/>
            <person name="Galagan J.E."/>
            <person name="Nusbaum C."/>
            <person name="Devon K."/>
            <person name="Henn M."/>
            <person name="Ma L.-J."/>
            <person name="Jaffe D.B."/>
            <person name="Butler J."/>
            <person name="Alvarez P."/>
            <person name="Gnerre S."/>
            <person name="Grabherr M."/>
            <person name="Kleber M."/>
            <person name="Mauceli E.W."/>
            <person name="Brockman W."/>
            <person name="Rounsley S."/>
            <person name="Young S.K."/>
            <person name="LaButti K."/>
            <person name="Pushparaj V."/>
            <person name="DeCaprio D."/>
            <person name="Crawford M."/>
            <person name="Koehrsen M."/>
            <person name="Engels R."/>
            <person name="Montgomery P."/>
            <person name="Pearson M."/>
            <person name="Howarth C."/>
            <person name="Larson L."/>
            <person name="Luoma S."/>
            <person name="White J."/>
            <person name="Alvarado L."/>
            <person name="Kodira C.D."/>
            <person name="Zeng Q."/>
            <person name="Oleary S."/>
            <person name="Yandava C."/>
            <person name="Denning D.W."/>
            <person name="Nierman W.C."/>
            <person name="Milne T."/>
            <person name="Madden K."/>
        </authorList>
    </citation>
    <scope>NUCLEOTIDE SEQUENCE [LARGE SCALE GENOMIC DNA]</scope>
    <source>
        <strain>NIH 2624 / FGSC A1156</strain>
    </source>
</reference>
<evidence type="ECO:0000250" key="1">
    <source>
        <dbReference type="UniProtKB" id="Q12510"/>
    </source>
</evidence>
<evidence type="ECO:0000255" key="2"/>
<evidence type="ECO:0000256" key="3">
    <source>
        <dbReference type="SAM" id="MobiDB-lite"/>
    </source>
</evidence>
<evidence type="ECO:0000305" key="4"/>
<sequence>MGGEELSEFEKQRLANIAERDALLKKLTQDAQSVGLFPPKMPKGASPAGDKAKKKKPAPKKVKKEEAAAAAPVPRRMSSRLRGIAAESEVAKRKADEHDAALQEAERAKRMRKSDSFSLSEMLVSGQKLSGESLLGVDVVTKGVAMPYQRTFSDEDIKKTTDKDLKALREEMSGLGLWDAWEPNRIKLTPERIYAMTFHPSESKPLIFAGDKMGHLGVLDASQTKPVSAATHDEDEEDDDDDPDPVLTTLKPHTRTISCMTIHPSKPTHLYTASYDSSIREMDLEKTTSVERYAPASTADDVPISGLDMALDDPHCLYWTTLDGEFGRYDMRTPRQDSATRWTLSDKKIGGFSLYPTHPHYFATASLDRTMRLWDLRKLSHKSPVAVGEHESRLSVSHAAFNGAGQVATSSYDDSLKIYDFGAKGIASWKPGHSLSDAQMKPDVVVRHNCQTGRWVTILRPQWQQNPQSHIQRFCIGNMNRFVDIYSGSGDQLAQLGGDGITAVPAVAVFHRSKNWVAGGTASGKICLWM</sequence>
<accession>Q0CSP9</accession>
<dbReference type="EMBL" id="CH476597">
    <property type="protein sequence ID" value="EAU36559.1"/>
    <property type="molecule type" value="Genomic_DNA"/>
</dbReference>
<dbReference type="RefSeq" id="XP_001212463.1">
    <property type="nucleotide sequence ID" value="XM_001212463.1"/>
</dbReference>
<dbReference type="SMR" id="Q0CSP9"/>
<dbReference type="STRING" id="341663.Q0CSP9"/>
<dbReference type="EnsemblFungi" id="EAU36559">
    <property type="protein sequence ID" value="EAU36559"/>
    <property type="gene ID" value="ATEG_03285"/>
</dbReference>
<dbReference type="GeneID" id="4317852"/>
<dbReference type="VEuPathDB" id="FungiDB:ATEG_03285"/>
<dbReference type="eggNOG" id="KOG4328">
    <property type="taxonomic scope" value="Eukaryota"/>
</dbReference>
<dbReference type="HOGENOM" id="CLU_017019_1_1_1"/>
<dbReference type="OMA" id="DPNTLYW"/>
<dbReference type="OrthoDB" id="9890280at2759"/>
<dbReference type="Proteomes" id="UP000007963">
    <property type="component" value="Unassembled WGS sequence"/>
</dbReference>
<dbReference type="GO" id="GO:0000785">
    <property type="term" value="C:chromatin"/>
    <property type="evidence" value="ECO:0007669"/>
    <property type="project" value="EnsemblFungi"/>
</dbReference>
<dbReference type="GO" id="GO:0005737">
    <property type="term" value="C:cytoplasm"/>
    <property type="evidence" value="ECO:0007669"/>
    <property type="project" value="EnsemblFungi"/>
</dbReference>
<dbReference type="GO" id="GO:0034399">
    <property type="term" value="C:nuclear periphery"/>
    <property type="evidence" value="ECO:0007669"/>
    <property type="project" value="EnsemblFungi"/>
</dbReference>
<dbReference type="GO" id="GO:0003677">
    <property type="term" value="F:DNA binding"/>
    <property type="evidence" value="ECO:0007669"/>
    <property type="project" value="UniProtKB-KW"/>
</dbReference>
<dbReference type="GO" id="GO:0006974">
    <property type="term" value="P:DNA damage response"/>
    <property type="evidence" value="ECO:0007669"/>
    <property type="project" value="UniProtKB-KW"/>
</dbReference>
<dbReference type="GO" id="GO:2000001">
    <property type="term" value="P:regulation of DNA damage checkpoint"/>
    <property type="evidence" value="ECO:0007669"/>
    <property type="project" value="EnsemblFungi"/>
</dbReference>
<dbReference type="FunFam" id="2.130.10.10:FF:000562">
    <property type="entry name" value="DNA damage-binding protein CMR1"/>
    <property type="match status" value="1"/>
</dbReference>
<dbReference type="Gene3D" id="2.130.10.10">
    <property type="entry name" value="YVTN repeat-like/Quinoprotein amine dehydrogenase"/>
    <property type="match status" value="1"/>
</dbReference>
<dbReference type="InterPro" id="IPR015943">
    <property type="entry name" value="WD40/YVTN_repeat-like_dom_sf"/>
</dbReference>
<dbReference type="InterPro" id="IPR036322">
    <property type="entry name" value="WD40_repeat_dom_sf"/>
</dbReference>
<dbReference type="InterPro" id="IPR001680">
    <property type="entry name" value="WD40_rpt"/>
</dbReference>
<dbReference type="InterPro" id="IPR050853">
    <property type="entry name" value="WD_repeat_DNA-damage-binding"/>
</dbReference>
<dbReference type="PANTHER" id="PTHR14773">
    <property type="entry name" value="WD REPEAT-CONTAINING PROTEIN 76"/>
    <property type="match status" value="1"/>
</dbReference>
<dbReference type="PANTHER" id="PTHR14773:SF0">
    <property type="entry name" value="WD REPEAT-CONTAINING PROTEIN 76"/>
    <property type="match status" value="1"/>
</dbReference>
<dbReference type="Pfam" id="PF00400">
    <property type="entry name" value="WD40"/>
    <property type="match status" value="2"/>
</dbReference>
<dbReference type="SMART" id="SM00320">
    <property type="entry name" value="WD40"/>
    <property type="match status" value="4"/>
</dbReference>
<dbReference type="SUPFAM" id="SSF50978">
    <property type="entry name" value="WD40 repeat-like"/>
    <property type="match status" value="1"/>
</dbReference>
<dbReference type="PROSITE" id="PS50082">
    <property type="entry name" value="WD_REPEATS_2"/>
    <property type="match status" value="1"/>
</dbReference>
<dbReference type="PROSITE" id="PS50294">
    <property type="entry name" value="WD_REPEATS_REGION"/>
    <property type="match status" value="1"/>
</dbReference>
<protein>
    <recommendedName>
        <fullName evidence="1">DNA damage-binding protein cmr1</fullName>
    </recommendedName>
</protein>
<comment type="function">
    <text evidence="1">DNA-binding protein that binds to both single- and double-stranded DNA. Binds preferentially to UV-damaged DNA. May be involved in DNA-metabolic processes.</text>
</comment>
<comment type="similarity">
    <text evidence="4">Belongs to the WD repeat DDB2/WDR76 family.</text>
</comment>
<proteinExistence type="inferred from homology"/>
<organism>
    <name type="scientific">Aspergillus terreus (strain NIH 2624 / FGSC A1156)</name>
    <dbReference type="NCBI Taxonomy" id="341663"/>
    <lineage>
        <taxon>Eukaryota</taxon>
        <taxon>Fungi</taxon>
        <taxon>Dikarya</taxon>
        <taxon>Ascomycota</taxon>
        <taxon>Pezizomycotina</taxon>
        <taxon>Eurotiomycetes</taxon>
        <taxon>Eurotiomycetidae</taxon>
        <taxon>Eurotiales</taxon>
        <taxon>Aspergillaceae</taxon>
        <taxon>Aspergillus</taxon>
        <taxon>Aspergillus subgen. Circumdati</taxon>
    </lineage>
</organism>
<keyword id="KW-0227">DNA damage</keyword>
<keyword id="KW-0238">DNA-binding</keyword>
<keyword id="KW-1185">Reference proteome</keyword>
<keyword id="KW-0677">Repeat</keyword>
<keyword id="KW-0853">WD repeat</keyword>
<feature type="chain" id="PRO_0000351101" description="DNA damage-binding protein cmr1">
    <location>
        <begin position="1"/>
        <end position="530"/>
    </location>
</feature>
<feature type="repeat" description="WD 1" evidence="2">
    <location>
        <begin position="188"/>
        <end position="229"/>
    </location>
</feature>
<feature type="repeat" description="WD 2" evidence="2">
    <location>
        <begin position="252"/>
        <end position="292"/>
    </location>
</feature>
<feature type="repeat" description="WD 3" evidence="2">
    <location>
        <begin position="302"/>
        <end position="339"/>
    </location>
</feature>
<feature type="repeat" description="WD 4" evidence="2">
    <location>
        <begin position="344"/>
        <end position="384"/>
    </location>
</feature>
<feature type="repeat" description="WD 5" evidence="2">
    <location>
        <begin position="389"/>
        <end position="430"/>
    </location>
</feature>
<feature type="repeat" description="WD 6" evidence="2">
    <location>
        <begin position="453"/>
        <end position="496"/>
    </location>
</feature>
<feature type="repeat" description="WD 7" evidence="2">
    <location>
        <begin position="499"/>
        <end position="530"/>
    </location>
</feature>
<feature type="region of interest" description="Disordered" evidence="3">
    <location>
        <begin position="34"/>
        <end position="115"/>
    </location>
</feature>
<feature type="region of interest" description="Disordered" evidence="3">
    <location>
        <begin position="224"/>
        <end position="250"/>
    </location>
</feature>
<feature type="compositionally biased region" description="Basic residues" evidence="3">
    <location>
        <begin position="52"/>
        <end position="62"/>
    </location>
</feature>
<feature type="compositionally biased region" description="Basic and acidic residues" evidence="3">
    <location>
        <begin position="89"/>
        <end position="108"/>
    </location>
</feature>
<feature type="compositionally biased region" description="Acidic residues" evidence="3">
    <location>
        <begin position="233"/>
        <end position="244"/>
    </location>
</feature>
<gene>
    <name type="ORF">ATEG_03285</name>
</gene>
<name>CMR1_ASPTN</name>